<gene>
    <name type="primary">yohJ</name>
    <name type="ordered locus">b2141</name>
    <name type="ordered locus">JW2129</name>
</gene>
<evidence type="ECO:0000255" key="1"/>
<evidence type="ECO:0000305" key="2"/>
<comment type="subcellular location">
    <subcellularLocation>
        <location>Cell inner membrane</location>
        <topology>Multi-pass membrane protein</topology>
    </subcellularLocation>
</comment>
<comment type="similarity">
    <text evidence="2">Belongs to the UPF0299 family.</text>
</comment>
<organism>
    <name type="scientific">Escherichia coli (strain K12)</name>
    <dbReference type="NCBI Taxonomy" id="83333"/>
    <lineage>
        <taxon>Bacteria</taxon>
        <taxon>Pseudomonadati</taxon>
        <taxon>Pseudomonadota</taxon>
        <taxon>Gammaproteobacteria</taxon>
        <taxon>Enterobacterales</taxon>
        <taxon>Enterobacteriaceae</taxon>
        <taxon>Escherichia</taxon>
    </lineage>
</organism>
<dbReference type="EMBL" id="U00007">
    <property type="protein sequence ID" value="AAA60504.1"/>
    <property type="molecule type" value="Genomic_DNA"/>
</dbReference>
<dbReference type="EMBL" id="U00096">
    <property type="protein sequence ID" value="AAC75202.1"/>
    <property type="molecule type" value="Genomic_DNA"/>
</dbReference>
<dbReference type="EMBL" id="AP009048">
    <property type="protein sequence ID" value="BAE76618.1"/>
    <property type="molecule type" value="Genomic_DNA"/>
</dbReference>
<dbReference type="PIR" id="D64982">
    <property type="entry name" value="D64982"/>
</dbReference>
<dbReference type="RefSeq" id="NP_416646.1">
    <property type="nucleotide sequence ID" value="NC_000913.3"/>
</dbReference>
<dbReference type="RefSeq" id="WP_001295452.1">
    <property type="nucleotide sequence ID" value="NZ_STEB01000002.1"/>
</dbReference>
<dbReference type="SMR" id="P60632"/>
<dbReference type="BioGRID" id="4262175">
    <property type="interactions" value="8"/>
</dbReference>
<dbReference type="FunCoup" id="P60632">
    <property type="interactions" value="181"/>
</dbReference>
<dbReference type="IntAct" id="P60632">
    <property type="interactions" value="1"/>
</dbReference>
<dbReference type="STRING" id="511145.b2141"/>
<dbReference type="PaxDb" id="511145-b2141"/>
<dbReference type="EnsemblBacteria" id="AAC75202">
    <property type="protein sequence ID" value="AAC75202"/>
    <property type="gene ID" value="b2141"/>
</dbReference>
<dbReference type="GeneID" id="949127"/>
<dbReference type="KEGG" id="ecj:JW2129"/>
<dbReference type="KEGG" id="eco:b2141"/>
<dbReference type="KEGG" id="ecoc:C3026_12000"/>
<dbReference type="PATRIC" id="fig|1411691.4.peg.101"/>
<dbReference type="EchoBASE" id="EB1958"/>
<dbReference type="eggNOG" id="COG1380">
    <property type="taxonomic scope" value="Bacteria"/>
</dbReference>
<dbReference type="HOGENOM" id="CLU_113736_1_1_6"/>
<dbReference type="InParanoid" id="P60632"/>
<dbReference type="OMA" id="MSVMFIP"/>
<dbReference type="OrthoDB" id="385012at2"/>
<dbReference type="PhylomeDB" id="P60632"/>
<dbReference type="BioCyc" id="EcoCyc:EG12023-MONOMER"/>
<dbReference type="PRO" id="PR:P60632"/>
<dbReference type="Proteomes" id="UP000000625">
    <property type="component" value="Chromosome"/>
</dbReference>
<dbReference type="GO" id="GO:0005886">
    <property type="term" value="C:plasma membrane"/>
    <property type="evidence" value="ECO:0000255"/>
    <property type="project" value="EcoCyc"/>
</dbReference>
<dbReference type="HAMAP" id="MF_01144">
    <property type="entry name" value="UPF0299"/>
    <property type="match status" value="1"/>
</dbReference>
<dbReference type="InterPro" id="IPR005538">
    <property type="entry name" value="LrgA/CidA"/>
</dbReference>
<dbReference type="InterPro" id="IPR022957">
    <property type="entry name" value="Uncharacterised_UPF0299"/>
</dbReference>
<dbReference type="NCBIfam" id="NF002494">
    <property type="entry name" value="PRK01821.1"/>
    <property type="match status" value="1"/>
</dbReference>
<dbReference type="PANTHER" id="PTHR33931">
    <property type="entry name" value="HOLIN-LIKE PROTEIN CIDA-RELATED"/>
    <property type="match status" value="1"/>
</dbReference>
<dbReference type="PANTHER" id="PTHR33931:SF5">
    <property type="entry name" value="UPF0299 MEMBRANE PROTEIN YOHJ"/>
    <property type="match status" value="1"/>
</dbReference>
<dbReference type="Pfam" id="PF03788">
    <property type="entry name" value="LrgA"/>
    <property type="match status" value="1"/>
</dbReference>
<protein>
    <recommendedName>
        <fullName>UPF0299 membrane protein YohJ</fullName>
    </recommendedName>
</protein>
<name>YOHJ_ECOLI</name>
<proteinExistence type="evidence at protein level"/>
<accession>P60632</accession>
<accession>P33372</accession>
<accession>Q2MAT8</accession>
<sequence>MSKTLNIIWQYLRAFVLIYACLYAGIFIASLLPVTIPGSIIGMLILFVLLALQILPAKWVNPGCYVLIRYMALLFVPIGVGVMQYFDLLRAQFGPVVVSCAVSTLVVFLVVSWSSQLVHGERKVVGQKGSEE</sequence>
<keyword id="KW-0997">Cell inner membrane</keyword>
<keyword id="KW-1003">Cell membrane</keyword>
<keyword id="KW-0472">Membrane</keyword>
<keyword id="KW-1185">Reference proteome</keyword>
<keyword id="KW-0812">Transmembrane</keyword>
<keyword id="KW-1133">Transmembrane helix</keyword>
<reference key="1">
    <citation type="submission" date="1993-10" db="EMBL/GenBank/DDBJ databases">
        <title>Automated multiplex sequencing of the E.coli genome.</title>
        <authorList>
            <person name="Richterich P."/>
            <person name="Lakey N."/>
            <person name="Gryan G."/>
            <person name="Jaehn L."/>
            <person name="Mintz L."/>
            <person name="Robison K."/>
            <person name="Church G.M."/>
        </authorList>
    </citation>
    <scope>NUCLEOTIDE SEQUENCE [LARGE SCALE GENOMIC DNA]</scope>
    <source>
        <strain>K12 / BHB2600</strain>
    </source>
</reference>
<reference key="2">
    <citation type="journal article" date="1997" name="Science">
        <title>The complete genome sequence of Escherichia coli K-12.</title>
        <authorList>
            <person name="Blattner F.R."/>
            <person name="Plunkett G. III"/>
            <person name="Bloch C.A."/>
            <person name="Perna N.T."/>
            <person name="Burland V."/>
            <person name="Riley M."/>
            <person name="Collado-Vides J."/>
            <person name="Glasner J.D."/>
            <person name="Rode C.K."/>
            <person name="Mayhew G.F."/>
            <person name="Gregor J."/>
            <person name="Davis N.W."/>
            <person name="Kirkpatrick H.A."/>
            <person name="Goeden M.A."/>
            <person name="Rose D.J."/>
            <person name="Mau B."/>
            <person name="Shao Y."/>
        </authorList>
    </citation>
    <scope>NUCLEOTIDE SEQUENCE [LARGE SCALE GENOMIC DNA]</scope>
    <source>
        <strain>K12 / MG1655 / ATCC 47076</strain>
    </source>
</reference>
<reference key="3">
    <citation type="journal article" date="2006" name="Mol. Syst. Biol.">
        <title>Highly accurate genome sequences of Escherichia coli K-12 strains MG1655 and W3110.</title>
        <authorList>
            <person name="Hayashi K."/>
            <person name="Morooka N."/>
            <person name="Yamamoto Y."/>
            <person name="Fujita K."/>
            <person name="Isono K."/>
            <person name="Choi S."/>
            <person name="Ohtsubo E."/>
            <person name="Baba T."/>
            <person name="Wanner B.L."/>
            <person name="Mori H."/>
            <person name="Horiuchi T."/>
        </authorList>
    </citation>
    <scope>NUCLEOTIDE SEQUENCE [LARGE SCALE GENOMIC DNA]</scope>
    <source>
        <strain>K12 / W3110 / ATCC 27325 / DSM 5911</strain>
    </source>
</reference>
<reference key="4">
    <citation type="journal article" date="2005" name="Science">
        <title>Global topology analysis of the Escherichia coli inner membrane proteome.</title>
        <authorList>
            <person name="Daley D.O."/>
            <person name="Rapp M."/>
            <person name="Granseth E."/>
            <person name="Melen K."/>
            <person name="Drew D."/>
            <person name="von Heijne G."/>
        </authorList>
    </citation>
    <scope>TOPOLOGY [LARGE SCALE ANALYSIS]</scope>
    <source>
        <strain>K12 / MG1655 / ATCC 47076</strain>
    </source>
</reference>
<feature type="chain" id="PRO_0000072806" description="UPF0299 membrane protein YohJ">
    <location>
        <begin position="1"/>
        <end position="132"/>
    </location>
</feature>
<feature type="topological domain" description="Periplasmic" evidence="1">
    <location>
        <begin position="1"/>
        <end position="6"/>
    </location>
</feature>
<feature type="transmembrane region" description="Helical" evidence="1">
    <location>
        <begin position="7"/>
        <end position="27"/>
    </location>
</feature>
<feature type="topological domain" description="Cytoplasmic" evidence="1">
    <location>
        <begin position="28"/>
        <end position="30"/>
    </location>
</feature>
<feature type="transmembrane region" description="Helical" evidence="1">
    <location>
        <begin position="31"/>
        <end position="51"/>
    </location>
</feature>
<feature type="topological domain" description="Periplasmic" evidence="1">
    <location>
        <begin position="52"/>
        <end position="62"/>
    </location>
</feature>
<feature type="transmembrane region" description="Helical" evidence="1">
    <location>
        <begin position="63"/>
        <end position="83"/>
    </location>
</feature>
<feature type="topological domain" description="Cytoplasmic" evidence="1">
    <location>
        <begin position="84"/>
        <end position="92"/>
    </location>
</feature>
<feature type="transmembrane region" description="Helical" evidence="1">
    <location>
        <begin position="93"/>
        <end position="113"/>
    </location>
</feature>
<feature type="topological domain" description="Periplasmic" evidence="1">
    <location>
        <begin position="114"/>
        <end position="132"/>
    </location>
</feature>